<accession>Q6AY26</accession>
<gene>
    <name type="primary">Rhno1</name>
</gene>
<keyword id="KW-0131">Cell cycle</keyword>
<keyword id="KW-0158">Chromosome</keyword>
<keyword id="KW-0227">DNA damage</keyword>
<keyword id="KW-0234">DNA repair</keyword>
<keyword id="KW-0539">Nucleus</keyword>
<keyword id="KW-0597">Phosphoprotein</keyword>
<keyword id="KW-1185">Reference proteome</keyword>
<keyword id="KW-0832">Ubl conjugation</keyword>
<sequence length="235" mass="27070">MPPRKRRRQCQKAQLLFHQQPLEGPKPHYESHQQPITHTVQVPSKPIDQSTITSWVLPQFDTAAESRFPTHRKHHRDQARHPTRRSTCKFPRLTFESPESSSSETLLLSNREQLQNSEKDAPRRPLVPLFSPQSCGELSVHVPQSLPHVFMPPDIQTPGSSVREDPISPDQKENSLPSCILGPRTPRTPEPGPVLVKDTPEEKYGIKVTWRRRRHLFAYLKERGKLDKSQFLVKT</sequence>
<protein>
    <recommendedName>
        <fullName>RAD9, HUS1, RAD1-interacting nuclear orphan protein 1</fullName>
    </recommendedName>
</protein>
<reference key="1">
    <citation type="journal article" date="2004" name="Genome Res.">
        <title>The status, quality, and expansion of the NIH full-length cDNA project: the Mammalian Gene Collection (MGC).</title>
        <authorList>
            <consortium name="The MGC Project Team"/>
        </authorList>
    </citation>
    <scope>NUCLEOTIDE SEQUENCE [LARGE SCALE MRNA]</scope>
    <source>
        <strain>Brown Norway</strain>
        <tissue>Testis</tissue>
    </source>
</reference>
<evidence type="ECO:0000250" key="1">
    <source>
        <dbReference type="UniProtKB" id="Q9BSD3"/>
    </source>
</evidence>
<evidence type="ECO:0000256" key="2">
    <source>
        <dbReference type="SAM" id="MobiDB-lite"/>
    </source>
</evidence>
<feature type="chain" id="PRO_0000263107" description="RAD9, HUS1, RAD1-interacting nuclear orphan protein 1">
    <location>
        <begin position="1"/>
        <end position="235"/>
    </location>
</feature>
<feature type="region of interest" description="Disordered" evidence="2">
    <location>
        <begin position="66"/>
        <end position="106"/>
    </location>
</feature>
<feature type="region of interest" description="Disordered" evidence="2">
    <location>
        <begin position="156"/>
        <end position="198"/>
    </location>
</feature>
<feature type="short sequence motif" description="RAD1-binding motif" evidence="1">
    <location>
        <begin position="54"/>
        <end position="60"/>
    </location>
</feature>
<feature type="short sequence motif" description="D-box" evidence="1">
    <location>
        <begin position="123"/>
        <end position="130"/>
    </location>
</feature>
<feature type="short sequence motif" description="KEN box" evidence="1">
    <location>
        <begin position="171"/>
        <end position="175"/>
    </location>
</feature>
<feature type="compositionally biased region" description="Basic residues" evidence="2">
    <location>
        <begin position="69"/>
        <end position="87"/>
    </location>
</feature>
<feature type="compositionally biased region" description="Low complexity" evidence="2">
    <location>
        <begin position="96"/>
        <end position="106"/>
    </location>
</feature>
<feature type="compositionally biased region" description="Basic and acidic residues" evidence="2">
    <location>
        <begin position="162"/>
        <end position="173"/>
    </location>
</feature>
<feature type="modified residue" description="Phosphoserine" evidence="1">
    <location>
        <position position="50"/>
    </location>
</feature>
<dbReference type="EMBL" id="BC079219">
    <property type="status" value="NOT_ANNOTATED_CDS"/>
    <property type="molecule type" value="mRNA"/>
</dbReference>
<dbReference type="RefSeq" id="NP_001388902.1">
    <property type="nucleotide sequence ID" value="NM_001401973.1"/>
</dbReference>
<dbReference type="RefSeq" id="NP_001388903.1">
    <property type="nucleotide sequence ID" value="NM_001401974.1"/>
</dbReference>
<dbReference type="RefSeq" id="XP_063141981.1">
    <property type="nucleotide sequence ID" value="XM_063285911.1"/>
</dbReference>
<dbReference type="RefSeq" id="XP_063141982.1">
    <property type="nucleotide sequence ID" value="XM_063285912.1"/>
</dbReference>
<dbReference type="RefSeq" id="XP_063141984.1">
    <property type="nucleotide sequence ID" value="XM_063285914.1"/>
</dbReference>
<dbReference type="FunCoup" id="Q6AY26">
    <property type="interactions" value="427"/>
</dbReference>
<dbReference type="STRING" id="10116.ENSRNOP00000036772"/>
<dbReference type="PhosphoSitePlus" id="Q6AY26"/>
<dbReference type="PaxDb" id="10116-ENSRNOP00000036772"/>
<dbReference type="Ensembl" id="ENSRNOT00000039086.5">
    <property type="protein sequence ID" value="ENSRNOP00000036772.3"/>
    <property type="gene ID" value="ENSRNOG00000028517.5"/>
</dbReference>
<dbReference type="GeneID" id="297627"/>
<dbReference type="AGR" id="RGD:1359404"/>
<dbReference type="RGD" id="1359404">
    <property type="gene designation" value="Rhno1"/>
</dbReference>
<dbReference type="eggNOG" id="ENOG502S7M3">
    <property type="taxonomic scope" value="Eukaryota"/>
</dbReference>
<dbReference type="GeneTree" id="ENSGT00390000003219"/>
<dbReference type="HOGENOM" id="CLU_075584_0_0_1"/>
<dbReference type="InParanoid" id="Q6AY26"/>
<dbReference type="OMA" id="PKHHYGS"/>
<dbReference type="OrthoDB" id="9942438at2759"/>
<dbReference type="PhylomeDB" id="Q6AY26"/>
<dbReference type="TreeFam" id="TF336053"/>
<dbReference type="Reactome" id="R-RNO-5685938">
    <property type="pathway name" value="HDR through Single Strand Annealing (SSA)"/>
</dbReference>
<dbReference type="Reactome" id="R-RNO-5693607">
    <property type="pathway name" value="Processing of DNA double-strand break ends"/>
</dbReference>
<dbReference type="Reactome" id="R-RNO-6804756">
    <property type="pathway name" value="Regulation of TP53 Activity through Phosphorylation"/>
</dbReference>
<dbReference type="Reactome" id="R-RNO-69473">
    <property type="pathway name" value="G2/M DNA damage checkpoint"/>
</dbReference>
<dbReference type="PRO" id="PR:Q6AY26"/>
<dbReference type="Proteomes" id="UP000002494">
    <property type="component" value="Chromosome 4"/>
</dbReference>
<dbReference type="Bgee" id="ENSRNOG00000028517">
    <property type="expression patterns" value="Expressed in thymus and 20 other cell types or tissues"/>
</dbReference>
<dbReference type="GO" id="GO:0000785">
    <property type="term" value="C:chromatin"/>
    <property type="evidence" value="ECO:0000266"/>
    <property type="project" value="RGD"/>
</dbReference>
<dbReference type="GO" id="GO:0005694">
    <property type="term" value="C:chromosome"/>
    <property type="evidence" value="ECO:0000266"/>
    <property type="project" value="RGD"/>
</dbReference>
<dbReference type="GO" id="GO:0005634">
    <property type="term" value="C:nucleus"/>
    <property type="evidence" value="ECO:0000266"/>
    <property type="project" value="RGD"/>
</dbReference>
<dbReference type="GO" id="GO:0035861">
    <property type="term" value="C:site of double-strand break"/>
    <property type="evidence" value="ECO:0000250"/>
    <property type="project" value="UniProtKB"/>
</dbReference>
<dbReference type="GO" id="GO:0140463">
    <property type="term" value="F:chromatin-protein adaptor activity"/>
    <property type="evidence" value="ECO:0000250"/>
    <property type="project" value="UniProtKB"/>
</dbReference>
<dbReference type="GO" id="GO:0071479">
    <property type="term" value="P:cellular response to ionizing radiation"/>
    <property type="evidence" value="ECO:0000266"/>
    <property type="project" value="RGD"/>
</dbReference>
<dbReference type="GO" id="GO:0034644">
    <property type="term" value="P:cellular response to UV"/>
    <property type="evidence" value="ECO:0000266"/>
    <property type="project" value="RGD"/>
</dbReference>
<dbReference type="GO" id="GO:0000077">
    <property type="term" value="P:DNA damage checkpoint signaling"/>
    <property type="evidence" value="ECO:0000266"/>
    <property type="project" value="RGD"/>
</dbReference>
<dbReference type="GO" id="GO:0097681">
    <property type="term" value="P:double-strand break repair via alternative nonhomologous end joining"/>
    <property type="evidence" value="ECO:0000250"/>
    <property type="project" value="UniProtKB"/>
</dbReference>
<dbReference type="GO" id="GO:0070318">
    <property type="term" value="P:positive regulation of G0 to G1 transition"/>
    <property type="evidence" value="ECO:0000266"/>
    <property type="project" value="RGD"/>
</dbReference>
<dbReference type="GO" id="GO:1990166">
    <property type="term" value="P:protein localization to site of double-strand break"/>
    <property type="evidence" value="ECO:0000250"/>
    <property type="project" value="UniProtKB"/>
</dbReference>
<dbReference type="GO" id="GO:0000725">
    <property type="term" value="P:recombinational repair"/>
    <property type="evidence" value="ECO:0000266"/>
    <property type="project" value="RGD"/>
</dbReference>
<dbReference type="InterPro" id="IPR029293">
    <property type="entry name" value="RHNO1"/>
</dbReference>
<dbReference type="PANTHER" id="PTHR35541">
    <property type="entry name" value="RAD9, HUS1, RAD1-INTERACTING NUCLEAR ORPHAN PROTEIN 1"/>
    <property type="match status" value="1"/>
</dbReference>
<dbReference type="PANTHER" id="PTHR35541:SF1">
    <property type="entry name" value="RAD9, HUS1, RAD1-INTERACTING NUCLEAR ORPHAN PROTEIN 1"/>
    <property type="match status" value="1"/>
</dbReference>
<dbReference type="Pfam" id="PF15319">
    <property type="entry name" value="RHINO"/>
    <property type="match status" value="1"/>
</dbReference>
<comment type="function">
    <text evidence="1">Involved in microhomology-mediated end-joining (MMEJ) DNA repair by promoting recruitment of polymerase theta (POLQ) to DNA damage sites during mitosis. MMEJ is an alternative non-homologous end-joining (NHEJ) machinery that takes place during mitosis to repair double-strand breaks in DNA that originate in S-phase. Accumulates in M-phase; following phosphorylation by PLK1, interacts with POLQ, enabling its recruitment to double-strand breaks for subsequent repair. Also involved in the DNA damage response (DDR) signaling in response to genotoxic stresses such as ionizing radiation (IR) during the S phase. Recruited to sites of DNA damage through interaction with the 9-1-1 cell-cycle checkpoint response complex and TOPBP1 in a ATR-dependent manner. Required for the progression of the G1 to S phase transition. Plays a role in the stimulation of CHEK1 phosphorylation.</text>
</comment>
<comment type="subunit">
    <text evidence="1">Interacts (when phosphorylated by PLK1) with POLQ; promoting POLQ recruitment to DNA damage sites. Interacts with RAD1; interaction is direct and promotes association with the 9-1-1 (RAD9-RAD1-HUS1) complex. Interacts with RAD18. Interacts with TOPBP1. Interacts with UBE2N.</text>
</comment>
<comment type="subcellular location">
    <subcellularLocation>
        <location evidence="1">Nucleus</location>
    </subcellularLocation>
    <subcellularLocation>
        <location evidence="1">Chromosome</location>
    </subcellularLocation>
    <text evidence="1">Localizes to sites of DNA damage in a H2AX-independent manner.</text>
</comment>
<comment type="domain">
    <text evidence="1">The RAD1-binding motif mediates interaction with RAD1.</text>
</comment>
<comment type="PTM">
    <text evidence="1">Phosphorylated at Ser-50 by PLK1, promoting interaction with polymerase theta (POLQ).</text>
</comment>
<comment type="PTM">
    <text evidence="1">Ubiquitinated and degraded by the APC/C complex upon mitotic exit.</text>
</comment>
<name>RHNO1_RAT</name>
<proteinExistence type="evidence at transcript level"/>
<organism>
    <name type="scientific">Rattus norvegicus</name>
    <name type="common">Rat</name>
    <dbReference type="NCBI Taxonomy" id="10116"/>
    <lineage>
        <taxon>Eukaryota</taxon>
        <taxon>Metazoa</taxon>
        <taxon>Chordata</taxon>
        <taxon>Craniata</taxon>
        <taxon>Vertebrata</taxon>
        <taxon>Euteleostomi</taxon>
        <taxon>Mammalia</taxon>
        <taxon>Eutheria</taxon>
        <taxon>Euarchontoglires</taxon>
        <taxon>Glires</taxon>
        <taxon>Rodentia</taxon>
        <taxon>Myomorpha</taxon>
        <taxon>Muroidea</taxon>
        <taxon>Muridae</taxon>
        <taxon>Murinae</taxon>
        <taxon>Rattus</taxon>
    </lineage>
</organism>